<protein>
    <recommendedName>
        <fullName evidence="7 8">Lipoamidase</fullName>
        <ecNumber evidence="4 5">3.5.1.138</ecNumber>
    </recommendedName>
    <alternativeName>
        <fullName evidence="6">Lipoyl-X hydrolase</fullName>
    </alternativeName>
    <alternativeName>
        <fullName evidence="8">Pyruvate dehydrogenase inactivase</fullName>
    </alternativeName>
</protein>
<gene>
    <name evidence="8" type="primary">lpa</name>
</gene>
<comment type="function">
    <text evidence="3 4 5">Amidohydrolase that releases lipoic acid from the protein-bound form (PubMed:13549405, PubMed:14086741, PubMed:15528186). Cleaves the amide bond that links lipoic acid to the lipoylated lysine epsilon-amino groups, leading to the formation of free lipoic acid plus the unmodified protein (PubMed:14086741, PubMed:15528186). Shows activity toward both high molecular weight protein substrates such as a lipoyl domain and intact 2-oxoacid dehydrogenases as well as small molecule substrates such as lipoyl-lysine (PubMed:14086741, PubMed:15528186). Also acts on small biotinylated substrates (PubMed:15528186). Hydrolyzes the synthetic substrates methyl lipoate and lipoamide (PubMed:14086741). The physiologically important substrates are probably lipoyl-lysine and small peptides containing lipoyl-lysine (PubMed:15528186). Lpa seems likely to enable this bacterium to utilize amide-linked forms of lipoic acid that otherwise could not be assimilated (PubMed:15528186).</text>
</comment>
<comment type="catalytic activity">
    <reaction evidence="4 5">
        <text>N(6)-[(R)-lipoyl]-L-lysyl-[lipoyl-carrier protein] + H2O = L-lysyl-[lipoyl-carrier protein] + (R)-lipoate</text>
        <dbReference type="Rhea" id="RHEA:76519"/>
        <dbReference type="Rhea" id="RHEA-COMP:10500"/>
        <dbReference type="Rhea" id="RHEA-COMP:10502"/>
        <dbReference type="ChEBI" id="CHEBI:15377"/>
        <dbReference type="ChEBI" id="CHEBI:29969"/>
        <dbReference type="ChEBI" id="CHEBI:83088"/>
        <dbReference type="ChEBI" id="CHEBI:83099"/>
        <dbReference type="EC" id="3.5.1.138"/>
    </reaction>
</comment>
<comment type="activity regulation">
    <text evidence="4">Lipoamidase activity is slightly inhibited by p-chloromercuribenzoate.</text>
</comment>
<comment type="biophysicochemical properties">
    <kinetics>
        <KM evidence="5">80 uM for octanoylated domain</KM>
    </kinetics>
    <phDependence>
        <text evidence="4">Optimum pH is 7.8.</text>
    </phDependence>
</comment>
<comment type="subunit">
    <text evidence="5">Homodimer in solution.</text>
</comment>
<comment type="subcellular location">
    <subcellularLocation>
        <location evidence="9">Cell membrane</location>
        <topology evidence="1">Single-pass membrane protein</topology>
        <orientation evidence="10">Cytoplasmic side</orientation>
    </subcellularLocation>
</comment>
<comment type="miscellaneous">
    <text evidence="5">Expression of Lpa in E.coli is toxic as it inhibits aerobic growth of E.coli through inactivation of the host 2-oxoacid dehydrogenases.</text>
</comment>
<comment type="similarity">
    <text evidence="9">Belongs to the amidase family.</text>
</comment>
<accession>Q5XVM9</accession>
<keyword id="KW-1003">Cell membrane</keyword>
<keyword id="KW-0378">Hydrolase</keyword>
<keyword id="KW-0472">Membrane</keyword>
<keyword id="KW-0812">Transmembrane</keyword>
<keyword id="KW-1133">Transmembrane helix</keyword>
<organism>
    <name type="scientific">Enterococcus faecalis</name>
    <name type="common">Streptococcus faecalis</name>
    <dbReference type="NCBI Taxonomy" id="1351"/>
    <lineage>
        <taxon>Bacteria</taxon>
        <taxon>Bacillati</taxon>
        <taxon>Bacillota</taxon>
        <taxon>Bacilli</taxon>
        <taxon>Lactobacillales</taxon>
        <taxon>Enterococcaceae</taxon>
        <taxon>Enterococcus</taxon>
    </lineage>
</organism>
<sequence>MLAQESILETTVQTETESVTTETSQTVANLESETTSQTVMQEKESSSAIAESSSRNVVAVTTETTNEIQNSGTDGKAVSAESVFSEADYKQATALELATLVREKKVTSEELVKIALAITKRENPTLNAVITLREEAALTEAKALQDTGQPFLGVPLLLKGLGQSLKGESNTNGFGFLRDQVAGGTSTFVKALQNAGFIIIGQTNYPELGWKNISDSKLYGVSVNPWNPNHYSGGSSGGAGASVAAAFVPIASGSDAGGSIRIPASWTGTVGLKPSRGVIIGNSNSAKGQTVHFGLSRTVADTNALFETLLTKKDLPAGHLSQAQPIAYTTESPAGTPVSAEAKEAVAEAVAFLKDQGYTLVEVKHPVDGERLMKNYYTVAAGSAGIADFMARQKLKRPLERNDVELLTWALFQTGKNITSEETTAAWTDIALQAQAMDEFYQQYPILLTPTTAATAPSIDNPLLKPEHAAQMEKIDQLSPAEQKQLIYDQWLTAFTYTPFTQQANLFGHPALSVPTYVSKEGLPLGIQFNSALNEDRTLLQLGALFENNHKINQPHVEEPDKDKEPDASGEPEKDKDPNASGEPDKDKEPDASGEPDKDKEPDASGEPDKDKEPDASGKPDKDKETKTSEGPIEGKDQNQNPDKAGKTTSGSSLDNSLNSSANQGTKSTESTHAFSNKSMIGKQEQLPKKVLPKAGAEVPSTFWIVLGGAFLVTSGTIYIRKTRK</sequence>
<reference key="1">
    <citation type="journal article" date="2005" name="J. Biol. Chem.">
        <title>Expression cloning and demonstration of Enterococcus faecalis lipoamidase (pyruvate dehydrogenase inactivase) as a Ser-Ser-Lys triad amidohydrolase.</title>
        <authorList>
            <person name="Jiang Y."/>
            <person name="Cronan J.E."/>
        </authorList>
    </citation>
    <scope>NUCLEOTIDE SEQUENCE [GENOMIC DNA]</scope>
    <scope>FUNCTION</scope>
    <scope>CATALYTIC ACTIVITY</scope>
    <scope>BIOPHYSICOCHEMICAL PROPERTIES</scope>
    <scope>SUBUNIT</scope>
    <scope>ACTIVE SITE</scope>
    <scope>MUTAGENESIS OF LYS-159; SER-235 AND SER-259</scope>
    <source>
        <strain>ATCC 11700 / DSM 20409 / NCIMB 8661 / 10C1</strain>
    </source>
</reference>
<reference key="2">
    <citation type="journal article" date="1958" name="J. Biol. Chem.">
        <title>Studies on the nature and reactions of protein-bound lipoic acid.</title>
        <authorList>
            <person name="Reed L.J."/>
            <person name="Koike M."/>
            <person name="Levitch M.E."/>
            <person name="Leach F.R."/>
        </authorList>
    </citation>
    <scope>FUNCTION</scope>
    <source>
        <strain>ATCC 11700 / DSM 20409 / NCIMB 8661 / 10C1</strain>
    </source>
</reference>
<reference key="3">
    <citation type="journal article" date="1963" name="J. Biol. Chem.">
        <title>Lipoamidase.</title>
        <authorList>
            <person name="Suzuki K."/>
            <person name="Reed L.J."/>
        </authorList>
    </citation>
    <scope>FUNCTION</scope>
    <scope>CATALYTIC ACTIVITY</scope>
    <scope>ACTIVITY REGULATION</scope>
    <scope>BIOPHYSICOCHEMICAL PROPERTIES</scope>
    <source>
        <strain>ATCC 11700 / DSM 20409 / NCIMB 8661 / 10C1</strain>
    </source>
</reference>
<proteinExistence type="evidence at protein level"/>
<feature type="chain" id="PRO_0000461000" description="Lipoamidase">
    <location>
        <begin position="1"/>
        <end position="725"/>
    </location>
</feature>
<feature type="transmembrane region" description="Helical" evidence="1">
    <location>
        <begin position="700"/>
        <end position="720"/>
    </location>
</feature>
<feature type="region of interest" description="Disordered" evidence="2">
    <location>
        <begin position="1"/>
        <end position="52"/>
    </location>
</feature>
<feature type="region of interest" description="Disordered" evidence="2">
    <location>
        <begin position="551"/>
        <end position="686"/>
    </location>
</feature>
<feature type="compositionally biased region" description="Low complexity" evidence="2">
    <location>
        <begin position="9"/>
        <end position="27"/>
    </location>
</feature>
<feature type="compositionally biased region" description="Polar residues" evidence="2">
    <location>
        <begin position="28"/>
        <end position="40"/>
    </location>
</feature>
<feature type="compositionally biased region" description="Basic and acidic residues" evidence="2">
    <location>
        <begin position="556"/>
        <end position="637"/>
    </location>
</feature>
<feature type="compositionally biased region" description="Low complexity" evidence="2">
    <location>
        <begin position="650"/>
        <end position="661"/>
    </location>
</feature>
<feature type="compositionally biased region" description="Polar residues" evidence="2">
    <location>
        <begin position="662"/>
        <end position="679"/>
    </location>
</feature>
<feature type="active site" description="Charge relay system" evidence="10">
    <location>
        <position position="159"/>
    </location>
</feature>
<feature type="active site" description="Charge relay system" evidence="10">
    <location>
        <position position="235"/>
    </location>
</feature>
<feature type="active site" description="Acyl-ester intermediate" evidence="10">
    <location>
        <position position="259"/>
    </location>
</feature>
<feature type="mutagenesis site" description="Strong decrease in activity on the lipoyl domain substrate and on lipoylated small molecules substrates." evidence="5">
    <original>K</original>
    <variation>A</variation>
    <location>
        <position position="159"/>
    </location>
</feature>
<feature type="mutagenesis site" description="Loss of activity on the lipoyl domain substrate and on lipoylated small molecules substrates." evidence="5">
    <original>S</original>
    <variation>A</variation>
    <location>
        <position position="235"/>
    </location>
</feature>
<feature type="mutagenesis site" description="Loss of activity on the lipoyl domain substrate and on lipoylated small molecules substrates." evidence="5">
    <original>S</original>
    <variation>A</variation>
    <location>
        <position position="259"/>
    </location>
</feature>
<name>LPA_ENTFL</name>
<dbReference type="EC" id="3.5.1.138" evidence="4 5"/>
<dbReference type="EMBL" id="AY735444">
    <property type="protein sequence ID" value="AAU94937.1"/>
    <property type="molecule type" value="Genomic_DNA"/>
</dbReference>
<dbReference type="SMR" id="Q5XVM9"/>
<dbReference type="BioCyc" id="MetaCyc:MONOMER-17109"/>
<dbReference type="SABIO-RK" id="Q5XVM9"/>
<dbReference type="GO" id="GO:0005886">
    <property type="term" value="C:plasma membrane"/>
    <property type="evidence" value="ECO:0007669"/>
    <property type="project" value="UniProtKB-SubCell"/>
</dbReference>
<dbReference type="GO" id="GO:0016787">
    <property type="term" value="F:hydrolase activity"/>
    <property type="evidence" value="ECO:0007669"/>
    <property type="project" value="UniProtKB-KW"/>
</dbReference>
<dbReference type="Gene3D" id="3.90.1300.10">
    <property type="entry name" value="Amidase signature (AS) domain"/>
    <property type="match status" value="1"/>
</dbReference>
<dbReference type="InterPro" id="IPR000120">
    <property type="entry name" value="Amidase"/>
</dbReference>
<dbReference type="InterPro" id="IPR020556">
    <property type="entry name" value="Amidase_CS"/>
</dbReference>
<dbReference type="InterPro" id="IPR023631">
    <property type="entry name" value="Amidase_dom"/>
</dbReference>
<dbReference type="InterPro" id="IPR036928">
    <property type="entry name" value="AS_sf"/>
</dbReference>
<dbReference type="PANTHER" id="PTHR11895:SF7">
    <property type="entry name" value="GLUTAMYL-TRNA(GLN) AMIDOTRANSFERASE SUBUNIT A, MITOCHONDRIAL"/>
    <property type="match status" value="1"/>
</dbReference>
<dbReference type="PANTHER" id="PTHR11895">
    <property type="entry name" value="TRANSAMIDASE"/>
    <property type="match status" value="1"/>
</dbReference>
<dbReference type="Pfam" id="PF01425">
    <property type="entry name" value="Amidase"/>
    <property type="match status" value="1"/>
</dbReference>
<dbReference type="SUPFAM" id="SSF75304">
    <property type="entry name" value="Amidase signature (AS) enzymes"/>
    <property type="match status" value="1"/>
</dbReference>
<dbReference type="PROSITE" id="PS00571">
    <property type="entry name" value="AMIDASES"/>
    <property type="match status" value="1"/>
</dbReference>
<evidence type="ECO:0000255" key="1"/>
<evidence type="ECO:0000256" key="2">
    <source>
        <dbReference type="SAM" id="MobiDB-lite"/>
    </source>
</evidence>
<evidence type="ECO:0000269" key="3">
    <source>
    </source>
</evidence>
<evidence type="ECO:0000269" key="4">
    <source>
    </source>
</evidence>
<evidence type="ECO:0000269" key="5">
    <source>
    </source>
</evidence>
<evidence type="ECO:0000303" key="6">
    <source>
    </source>
</evidence>
<evidence type="ECO:0000303" key="7">
    <source>
    </source>
</evidence>
<evidence type="ECO:0000303" key="8">
    <source>
    </source>
</evidence>
<evidence type="ECO:0000305" key="9"/>
<evidence type="ECO:0000305" key="10">
    <source>
    </source>
</evidence>